<gene>
    <name evidence="1" type="primary">moaC</name>
    <name type="ordered locus">BMEA_A1186</name>
</gene>
<protein>
    <recommendedName>
        <fullName evidence="1">Cyclic pyranopterin monophosphate synthase</fullName>
        <ecNumber evidence="1">4.6.1.17</ecNumber>
    </recommendedName>
    <alternativeName>
        <fullName evidence="1">Molybdenum cofactor biosynthesis protein C</fullName>
    </alternativeName>
</protein>
<accession>C0RJB2</accession>
<comment type="function">
    <text evidence="1">Catalyzes the conversion of (8S)-3',8-cyclo-7,8-dihydroguanosine 5'-triphosphate to cyclic pyranopterin monophosphate (cPMP).</text>
</comment>
<comment type="catalytic activity">
    <reaction evidence="1">
        <text>(8S)-3',8-cyclo-7,8-dihydroguanosine 5'-triphosphate = cyclic pyranopterin phosphate + diphosphate</text>
        <dbReference type="Rhea" id="RHEA:49580"/>
        <dbReference type="ChEBI" id="CHEBI:33019"/>
        <dbReference type="ChEBI" id="CHEBI:59648"/>
        <dbReference type="ChEBI" id="CHEBI:131766"/>
        <dbReference type="EC" id="4.6.1.17"/>
    </reaction>
</comment>
<comment type="pathway">
    <text evidence="1">Cofactor biosynthesis; molybdopterin biosynthesis.</text>
</comment>
<comment type="subunit">
    <text evidence="1">Homohexamer; trimer of dimers.</text>
</comment>
<comment type="similarity">
    <text evidence="1">Belongs to the MoaC family.</text>
</comment>
<feature type="chain" id="PRO_1000164881" description="Cyclic pyranopterin monophosphate synthase">
    <location>
        <begin position="1"/>
        <end position="165"/>
    </location>
</feature>
<feature type="active site" evidence="1">
    <location>
        <position position="129"/>
    </location>
</feature>
<feature type="binding site" evidence="1">
    <location>
        <begin position="76"/>
        <end position="78"/>
    </location>
    <ligand>
        <name>substrate</name>
    </ligand>
</feature>
<feature type="binding site" evidence="1">
    <location>
        <begin position="114"/>
        <end position="115"/>
    </location>
    <ligand>
        <name>substrate</name>
    </ligand>
</feature>
<name>MOAC_BRUMB</name>
<organism>
    <name type="scientific">Brucella melitensis biotype 2 (strain ATCC 23457)</name>
    <dbReference type="NCBI Taxonomy" id="546272"/>
    <lineage>
        <taxon>Bacteria</taxon>
        <taxon>Pseudomonadati</taxon>
        <taxon>Pseudomonadota</taxon>
        <taxon>Alphaproteobacteria</taxon>
        <taxon>Hyphomicrobiales</taxon>
        <taxon>Brucellaceae</taxon>
        <taxon>Brucella/Ochrobactrum group</taxon>
        <taxon>Brucella</taxon>
    </lineage>
</organism>
<keyword id="KW-0456">Lyase</keyword>
<keyword id="KW-0501">Molybdenum cofactor biosynthesis</keyword>
<reference key="1">
    <citation type="submission" date="2009-03" db="EMBL/GenBank/DDBJ databases">
        <title>Brucella melitensis ATCC 23457 whole genome shotgun sequencing project.</title>
        <authorList>
            <person name="Setubal J.C."/>
            <person name="Boyle S."/>
            <person name="Crasta O.R."/>
            <person name="Gillespie J.J."/>
            <person name="Kenyon R.W."/>
            <person name="Lu J."/>
            <person name="Mane S."/>
            <person name="Nagrani S."/>
            <person name="Shallom J.M."/>
            <person name="Shallom S."/>
            <person name="Shukla M."/>
            <person name="Snyder E.E."/>
            <person name="Sobral B.W."/>
            <person name="Wattam A.R."/>
            <person name="Will R."/>
            <person name="Williams K."/>
            <person name="Yoo H."/>
            <person name="Munk C."/>
            <person name="Tapia R."/>
            <person name="Han C."/>
            <person name="Detter J.C."/>
            <person name="Bruce D."/>
            <person name="Brettin T.S."/>
        </authorList>
    </citation>
    <scope>NUCLEOTIDE SEQUENCE [LARGE SCALE GENOMIC DNA]</scope>
    <source>
        <strain>ATCC 23457</strain>
    </source>
</reference>
<sequence length="165" mass="17480">MSGKLTHIDQTGAANMVDVGSKDETERQAVAEGAVRMKPETLALILEGNAAKGDVIGTARLAGIMAAKRTSDLIPLCHPLMLTKVAVEIEPDENLPGLRVRALARLKGRTGVEMEALTAASVTCLTIYDMAKAVDRHMEIGSIRVIEKSGGKSGDWAVSDPASMR</sequence>
<dbReference type="EC" id="4.6.1.17" evidence="1"/>
<dbReference type="EMBL" id="CP001488">
    <property type="protein sequence ID" value="ACO00920.1"/>
    <property type="molecule type" value="Genomic_DNA"/>
</dbReference>
<dbReference type="RefSeq" id="WP_004683848.1">
    <property type="nucleotide sequence ID" value="NC_012441.1"/>
</dbReference>
<dbReference type="SMR" id="C0RJB2"/>
<dbReference type="GeneID" id="97533606"/>
<dbReference type="KEGG" id="bmi:BMEA_A1186"/>
<dbReference type="HOGENOM" id="CLU_074693_1_1_5"/>
<dbReference type="UniPathway" id="UPA00344"/>
<dbReference type="Proteomes" id="UP000001748">
    <property type="component" value="Chromosome I"/>
</dbReference>
<dbReference type="GO" id="GO:0061799">
    <property type="term" value="F:cyclic pyranopterin monophosphate synthase activity"/>
    <property type="evidence" value="ECO:0007669"/>
    <property type="project" value="UniProtKB-UniRule"/>
</dbReference>
<dbReference type="GO" id="GO:0006777">
    <property type="term" value="P:Mo-molybdopterin cofactor biosynthetic process"/>
    <property type="evidence" value="ECO:0007669"/>
    <property type="project" value="UniProtKB-UniRule"/>
</dbReference>
<dbReference type="CDD" id="cd01420">
    <property type="entry name" value="MoaC_PE"/>
    <property type="match status" value="1"/>
</dbReference>
<dbReference type="Gene3D" id="3.30.70.640">
    <property type="entry name" value="Molybdopterin cofactor biosynthesis C (MoaC) domain"/>
    <property type="match status" value="1"/>
</dbReference>
<dbReference type="HAMAP" id="MF_01224_B">
    <property type="entry name" value="MoaC_B"/>
    <property type="match status" value="1"/>
</dbReference>
<dbReference type="InterPro" id="IPR023045">
    <property type="entry name" value="MoaC"/>
</dbReference>
<dbReference type="InterPro" id="IPR047594">
    <property type="entry name" value="MoaC_bact/euk"/>
</dbReference>
<dbReference type="InterPro" id="IPR036522">
    <property type="entry name" value="MoaC_sf"/>
</dbReference>
<dbReference type="InterPro" id="IPR050105">
    <property type="entry name" value="MoCo_biosynth_MoaA/MoaC"/>
</dbReference>
<dbReference type="InterPro" id="IPR002820">
    <property type="entry name" value="Mopterin_CF_biosynth-C_dom"/>
</dbReference>
<dbReference type="NCBIfam" id="TIGR00581">
    <property type="entry name" value="moaC"/>
    <property type="match status" value="1"/>
</dbReference>
<dbReference type="NCBIfam" id="NF006870">
    <property type="entry name" value="PRK09364.1"/>
    <property type="match status" value="1"/>
</dbReference>
<dbReference type="PANTHER" id="PTHR22960">
    <property type="entry name" value="MOLYBDOPTERIN COFACTOR SYNTHESIS PROTEIN A"/>
    <property type="match status" value="1"/>
</dbReference>
<dbReference type="Pfam" id="PF01967">
    <property type="entry name" value="MoaC"/>
    <property type="match status" value="1"/>
</dbReference>
<dbReference type="SUPFAM" id="SSF55040">
    <property type="entry name" value="Molybdenum cofactor biosynthesis protein C, MoaC"/>
    <property type="match status" value="1"/>
</dbReference>
<evidence type="ECO:0000255" key="1">
    <source>
        <dbReference type="HAMAP-Rule" id="MF_01224"/>
    </source>
</evidence>
<proteinExistence type="inferred from homology"/>